<dbReference type="EMBL" id="AJ245417">
    <property type="protein sequence ID" value="CAB52191.1"/>
    <property type="molecule type" value="mRNA"/>
</dbReference>
<dbReference type="EMBL" id="AJ315545">
    <property type="protein sequence ID" value="CAC85543.1"/>
    <property type="molecule type" value="mRNA"/>
</dbReference>
<dbReference type="EMBL" id="AK289364">
    <property type="protein sequence ID" value="BAF82053.1"/>
    <property type="molecule type" value="mRNA"/>
</dbReference>
<dbReference type="EMBL" id="BA000025">
    <property type="protein sequence ID" value="BAB63385.1"/>
    <property type="molecule type" value="Genomic_DNA"/>
</dbReference>
<dbReference type="EMBL" id="AF129756">
    <property type="protein sequence ID" value="AAF04397.1"/>
    <property type="molecule type" value="Genomic_DNA"/>
</dbReference>
<dbReference type="EMBL" id="AL662899">
    <property type="status" value="NOT_ANNOTATED_CDS"/>
    <property type="molecule type" value="Genomic_DNA"/>
</dbReference>
<dbReference type="EMBL" id="AL670886">
    <property type="status" value="NOT_ANNOTATED_CDS"/>
    <property type="molecule type" value="Genomic_DNA"/>
</dbReference>
<dbReference type="EMBL" id="AL805934">
    <property type="status" value="NOT_ANNOTATED_CDS"/>
    <property type="molecule type" value="Genomic_DNA"/>
</dbReference>
<dbReference type="EMBL" id="BX511262">
    <property type="status" value="NOT_ANNOTATED_CDS"/>
    <property type="molecule type" value="Genomic_DNA"/>
</dbReference>
<dbReference type="EMBL" id="CR354443">
    <property type="status" value="NOT_ANNOTATED_CDS"/>
    <property type="molecule type" value="Genomic_DNA"/>
</dbReference>
<dbReference type="EMBL" id="CR753842">
    <property type="status" value="NOT_ANNOTATED_CDS"/>
    <property type="molecule type" value="Genomic_DNA"/>
</dbReference>
<dbReference type="EMBL" id="CR759761">
    <property type="status" value="NOT_ANNOTATED_CDS"/>
    <property type="molecule type" value="Genomic_DNA"/>
</dbReference>
<dbReference type="EMBL" id="CH471081">
    <property type="protein sequence ID" value="EAX03476.1"/>
    <property type="molecule type" value="Genomic_DNA"/>
</dbReference>
<dbReference type="CCDS" id="CCDS34400.1">
    <molecule id="Q8NDX9-1"/>
</dbReference>
<dbReference type="RefSeq" id="NP_067044.2">
    <molecule id="Q8NDX9-1"/>
    <property type="nucleotide sequence ID" value="NM_021221.3"/>
</dbReference>
<dbReference type="BioGRID" id="121826">
    <property type="interactions" value="284"/>
</dbReference>
<dbReference type="FunCoup" id="Q8NDX9">
    <property type="interactions" value="1"/>
</dbReference>
<dbReference type="IntAct" id="Q8NDX9">
    <property type="interactions" value="18"/>
</dbReference>
<dbReference type="STRING" id="9606.ENSP00000365024"/>
<dbReference type="GlyCosmos" id="Q8NDX9">
    <property type="glycosylation" value="2 sites, No reported glycans"/>
</dbReference>
<dbReference type="GlyGen" id="Q8NDX9">
    <property type="glycosylation" value="2 sites"/>
</dbReference>
<dbReference type="iPTMnet" id="Q8NDX9"/>
<dbReference type="PhosphoSitePlus" id="Q8NDX9"/>
<dbReference type="BioMuta" id="LY6G5B"/>
<dbReference type="DMDM" id="74751234"/>
<dbReference type="MassIVE" id="Q8NDX9"/>
<dbReference type="PaxDb" id="9606-ENSP00000365024"/>
<dbReference type="PeptideAtlas" id="Q8NDX9"/>
<dbReference type="ProteomicsDB" id="73088">
    <molecule id="Q8NDX9-2"/>
</dbReference>
<dbReference type="Antibodypedia" id="34937">
    <property type="antibodies" value="35 antibodies from 14 providers"/>
</dbReference>
<dbReference type="DNASU" id="58496"/>
<dbReference type="Ensembl" id="ENST00000375864.5">
    <molecule id="Q8NDX9-1"/>
    <property type="protein sequence ID" value="ENSP00000365024.4"/>
    <property type="gene ID" value="ENSG00000240053.9"/>
</dbReference>
<dbReference type="Ensembl" id="ENST00000409525.1">
    <molecule id="Q8NDX9-2"/>
    <property type="protein sequence ID" value="ENSP00000386365.1"/>
    <property type="gene ID" value="ENSG00000240053.9"/>
</dbReference>
<dbReference type="Ensembl" id="ENST00000462244.1">
    <property type="protein sequence ID" value="ENSP00000418445.1"/>
    <property type="gene ID" value="ENSG00000239285.7"/>
</dbReference>
<dbReference type="Ensembl" id="ENST00000471674.1">
    <molecule id="Q8NDX9-1"/>
    <property type="protein sequence ID" value="ENSP00000417055.1"/>
    <property type="gene ID" value="ENSG00000241132.7"/>
</dbReference>
<dbReference type="Ensembl" id="ENST00000480515.1">
    <molecule id="Q8NDX9-1"/>
    <property type="protein sequence ID" value="ENSP00000418119.1"/>
    <property type="gene ID" value="ENSG00000240433.4"/>
</dbReference>
<dbReference type="Ensembl" id="ENST00000480530.1">
    <molecule id="Q8NDX9-1"/>
    <property type="protein sequence ID" value="ENSP00000417822.1"/>
    <property type="gene ID" value="ENSG00000241713.7"/>
</dbReference>
<dbReference type="Ensembl" id="ENST00000484964.1">
    <molecule id="Q8NDX9-1"/>
    <property type="protein sequence ID" value="ENSP00000420698.1"/>
    <property type="gene ID" value="ENSG00000244672.4"/>
</dbReference>
<dbReference type="Ensembl" id="ENST00000490011.1">
    <property type="protein sequence ID" value="ENSP00000418217.1"/>
    <property type="gene ID" value="ENSG00000239497.7"/>
</dbReference>
<dbReference type="GeneID" id="58496"/>
<dbReference type="KEGG" id="hsa:58496"/>
<dbReference type="MANE-Select" id="ENST00000375864.5">
    <property type="protein sequence ID" value="ENSP00000365024.4"/>
    <property type="RefSeq nucleotide sequence ID" value="NM_021221.3"/>
    <property type="RefSeq protein sequence ID" value="NP_067044.2"/>
</dbReference>
<dbReference type="UCSC" id="uc003nvt.2">
    <molecule id="Q8NDX9-1"/>
    <property type="organism name" value="human"/>
</dbReference>
<dbReference type="AGR" id="HGNC:13931"/>
<dbReference type="CTD" id="58496"/>
<dbReference type="DisGeNET" id="58496"/>
<dbReference type="GeneCards" id="LY6G5B"/>
<dbReference type="HGNC" id="HGNC:13931">
    <property type="gene designation" value="LY6G5B"/>
</dbReference>
<dbReference type="HPA" id="ENSG00000240053">
    <property type="expression patterns" value="Low tissue specificity"/>
</dbReference>
<dbReference type="MIM" id="610433">
    <property type="type" value="gene"/>
</dbReference>
<dbReference type="neXtProt" id="NX_Q8NDX9"/>
<dbReference type="OpenTargets" id="ENSG00000240053"/>
<dbReference type="PharmGKB" id="PA37826"/>
<dbReference type="VEuPathDB" id="HostDB:ENSG00000240053"/>
<dbReference type="eggNOG" id="ENOG502SXN1">
    <property type="taxonomic scope" value="Eukaryota"/>
</dbReference>
<dbReference type="GeneTree" id="ENSGT00520000060793"/>
<dbReference type="HOGENOM" id="CLU_120540_0_0_1"/>
<dbReference type="InParanoid" id="Q8NDX9"/>
<dbReference type="OMA" id="CMVISIY"/>
<dbReference type="OrthoDB" id="9834531at2759"/>
<dbReference type="PAN-GO" id="Q8NDX9">
    <property type="GO annotations" value="1 GO annotation based on evolutionary models"/>
</dbReference>
<dbReference type="PhylomeDB" id="Q8NDX9"/>
<dbReference type="TreeFam" id="TF338717"/>
<dbReference type="PathwayCommons" id="Q8NDX9"/>
<dbReference type="BioGRID-ORCS" id="58496">
    <property type="hits" value="8 hits in 1141 CRISPR screens"/>
</dbReference>
<dbReference type="ChiTaRS" id="LY6G5B">
    <property type="organism name" value="human"/>
</dbReference>
<dbReference type="GenomeRNAi" id="58496"/>
<dbReference type="Pharos" id="Q8NDX9">
    <property type="development level" value="Tdark"/>
</dbReference>
<dbReference type="PRO" id="PR:Q8NDX9"/>
<dbReference type="Proteomes" id="UP000005640">
    <property type="component" value="Chromosome 6"/>
</dbReference>
<dbReference type="RNAct" id="Q8NDX9">
    <property type="molecule type" value="protein"/>
</dbReference>
<dbReference type="Bgee" id="ENSG00000240053">
    <property type="expression patterns" value="Expressed in right hemisphere of cerebellum and 95 other cell types or tissues"/>
</dbReference>
<dbReference type="ExpressionAtlas" id="Q8NDX9">
    <property type="expression patterns" value="baseline and differential"/>
</dbReference>
<dbReference type="GO" id="GO:0009897">
    <property type="term" value="C:external side of plasma membrane"/>
    <property type="evidence" value="ECO:0007669"/>
    <property type="project" value="Ensembl"/>
</dbReference>
<dbReference type="GO" id="GO:0005576">
    <property type="term" value="C:extracellular region"/>
    <property type="evidence" value="ECO:0007669"/>
    <property type="project" value="UniProtKB-SubCell"/>
</dbReference>
<dbReference type="GO" id="GO:0032991">
    <property type="term" value="C:protein-containing complex"/>
    <property type="evidence" value="ECO:0000314"/>
    <property type="project" value="UniProtKB"/>
</dbReference>
<dbReference type="GO" id="GO:0042802">
    <property type="term" value="F:identical protein binding"/>
    <property type="evidence" value="ECO:0000314"/>
    <property type="project" value="UniProtKB"/>
</dbReference>
<dbReference type="CDD" id="cd23544">
    <property type="entry name" value="TFP_LU_ECD_Ly6G5b"/>
    <property type="match status" value="1"/>
</dbReference>
<dbReference type="InterPro" id="IPR016054">
    <property type="entry name" value="LY6_UPA_recep-like"/>
</dbReference>
<dbReference type="InterPro" id="IPR038773">
    <property type="entry name" value="LY6G5B"/>
</dbReference>
<dbReference type="InterPro" id="IPR045860">
    <property type="entry name" value="Snake_toxin-like_sf"/>
</dbReference>
<dbReference type="PANTHER" id="PTHR14313">
    <property type="entry name" value="LYMPHOCYTE ANTIGEN 6 COMPLEX LOCUS PROTEIN G5B"/>
    <property type="match status" value="1"/>
</dbReference>
<dbReference type="PANTHER" id="PTHR14313:SF2">
    <property type="entry name" value="LYMPHOCYTE ANTIGEN 6 COMPLEX LOCUS PROTEIN G5B"/>
    <property type="match status" value="1"/>
</dbReference>
<dbReference type="Pfam" id="PF00021">
    <property type="entry name" value="UPAR_LY6"/>
    <property type="match status" value="1"/>
</dbReference>
<dbReference type="SUPFAM" id="SSF57302">
    <property type="entry name" value="Snake toxin-like"/>
    <property type="match status" value="1"/>
</dbReference>
<name>LY65B_HUMAN</name>
<organism>
    <name type="scientific">Homo sapiens</name>
    <name type="common">Human</name>
    <dbReference type="NCBI Taxonomy" id="9606"/>
    <lineage>
        <taxon>Eukaryota</taxon>
        <taxon>Metazoa</taxon>
        <taxon>Chordata</taxon>
        <taxon>Craniata</taxon>
        <taxon>Vertebrata</taxon>
        <taxon>Euteleostomi</taxon>
        <taxon>Mammalia</taxon>
        <taxon>Eutheria</taxon>
        <taxon>Euarchontoglires</taxon>
        <taxon>Primates</taxon>
        <taxon>Haplorrhini</taxon>
        <taxon>Catarrhini</taxon>
        <taxon>Hominidae</taxon>
        <taxon>Homo</taxon>
    </lineage>
</organism>
<protein>
    <recommendedName>
        <fullName>Lymphocyte antigen 6 complex locus protein G5b</fullName>
    </recommendedName>
</protein>
<gene>
    <name type="primary">LY6G5B</name>
    <name type="synonym">C6orf19</name>
    <name type="synonym">G5B</name>
</gene>
<evidence type="ECO:0000250" key="1"/>
<evidence type="ECO:0000255" key="2"/>
<evidence type="ECO:0000269" key="3">
    <source>
    </source>
</evidence>
<evidence type="ECO:0000269" key="4">
    <source>
    </source>
</evidence>
<evidence type="ECO:0000303" key="5">
    <source>
    </source>
</evidence>
<evidence type="ECO:0000305" key="6"/>
<sequence>MKVHMLVGVLVMVGFTVGKVPVPDIRTCHFCLVEDPSVGCISGSEKCTISSSSLCMVITIYYDVKVRFIVRGCGQYISYRCQEKRNTYFAEYWYQAQCCQYDYCNSWSSPQLQSSLPEPHDRPLALPLSDSQIQWFYQALNLSLPLPNFHAGTEPDGLDPMVTLSLNLGLSFAELRRMYLFLNSSGLLVLPQAGLLTPHPS</sequence>
<accession>Q8NDX9</accession>
<accession>B0UXB2</accession>
<accession>B0UZ65</accession>
<accession>B0UZP8</accession>
<accession>B7ZCA3</accession>
<accession>Q5SQ62</accession>
<accession>Q5SST3</accession>
<accession>Q9UKT0</accession>
<accession>Q9UMQ0</accession>
<keyword id="KW-0025">Alternative splicing</keyword>
<keyword id="KW-1015">Disulfide bond</keyword>
<keyword id="KW-0325">Glycoprotein</keyword>
<keyword id="KW-1185">Reference proteome</keyword>
<keyword id="KW-0964">Secreted</keyword>
<keyword id="KW-0732">Signal</keyword>
<reference key="1">
    <citation type="journal article" date="1996" name="Genomics">
        <title>Localization of eight additional genes in the human major histocompatibility complex, including the gene encoding the casein kinase II beta subunit (CSNK2B).</title>
        <authorList>
            <person name="Albertella M.R."/>
            <person name="Jones H."/>
            <person name="Thomson W."/>
            <person name="Olavesen M.G."/>
            <person name="Campbell R.D."/>
        </authorList>
    </citation>
    <scope>NUCLEOTIDE SEQUENCE [MRNA] (ISOFORM 2)</scope>
</reference>
<reference key="2">
    <citation type="journal article" date="2002" name="Genomics">
        <title>Transcriptional analysis of a novel cluster of LY-6 family members in the human and mouse major histocompatibility complex: five genes with many splice forms.</title>
        <authorList>
            <person name="Mallya M."/>
            <person name="Campbell R.D."/>
            <person name="Aguado B."/>
        </authorList>
    </citation>
    <scope>NUCLEOTIDE SEQUENCE [MRNA] (ISOFORM 1)</scope>
</reference>
<reference key="3">
    <citation type="journal article" date="2004" name="Nat. Genet.">
        <title>Complete sequencing and characterization of 21,243 full-length human cDNAs.</title>
        <authorList>
            <person name="Ota T."/>
            <person name="Suzuki Y."/>
            <person name="Nishikawa T."/>
            <person name="Otsuki T."/>
            <person name="Sugiyama T."/>
            <person name="Irie R."/>
            <person name="Wakamatsu A."/>
            <person name="Hayashi K."/>
            <person name="Sato H."/>
            <person name="Nagai K."/>
            <person name="Kimura K."/>
            <person name="Makita H."/>
            <person name="Sekine M."/>
            <person name="Obayashi M."/>
            <person name="Nishi T."/>
            <person name="Shibahara T."/>
            <person name="Tanaka T."/>
            <person name="Ishii S."/>
            <person name="Yamamoto J."/>
            <person name="Saito K."/>
            <person name="Kawai Y."/>
            <person name="Isono Y."/>
            <person name="Nakamura Y."/>
            <person name="Nagahari K."/>
            <person name="Murakami K."/>
            <person name="Yasuda T."/>
            <person name="Iwayanagi T."/>
            <person name="Wagatsuma M."/>
            <person name="Shiratori A."/>
            <person name="Sudo H."/>
            <person name="Hosoiri T."/>
            <person name="Kaku Y."/>
            <person name="Kodaira H."/>
            <person name="Kondo H."/>
            <person name="Sugawara M."/>
            <person name="Takahashi M."/>
            <person name="Kanda K."/>
            <person name="Yokoi T."/>
            <person name="Furuya T."/>
            <person name="Kikkawa E."/>
            <person name="Omura Y."/>
            <person name="Abe K."/>
            <person name="Kamihara K."/>
            <person name="Katsuta N."/>
            <person name="Sato K."/>
            <person name="Tanikawa M."/>
            <person name="Yamazaki M."/>
            <person name="Ninomiya K."/>
            <person name="Ishibashi T."/>
            <person name="Yamashita H."/>
            <person name="Murakawa K."/>
            <person name="Fujimori K."/>
            <person name="Tanai H."/>
            <person name="Kimata M."/>
            <person name="Watanabe M."/>
            <person name="Hiraoka S."/>
            <person name="Chiba Y."/>
            <person name="Ishida S."/>
            <person name="Ono Y."/>
            <person name="Takiguchi S."/>
            <person name="Watanabe S."/>
            <person name="Yosida M."/>
            <person name="Hotuta T."/>
            <person name="Kusano J."/>
            <person name="Kanehori K."/>
            <person name="Takahashi-Fujii A."/>
            <person name="Hara H."/>
            <person name="Tanase T.-O."/>
            <person name="Nomura Y."/>
            <person name="Togiya S."/>
            <person name="Komai F."/>
            <person name="Hara R."/>
            <person name="Takeuchi K."/>
            <person name="Arita M."/>
            <person name="Imose N."/>
            <person name="Musashino K."/>
            <person name="Yuuki H."/>
            <person name="Oshima A."/>
            <person name="Sasaki N."/>
            <person name="Aotsuka S."/>
            <person name="Yoshikawa Y."/>
            <person name="Matsunawa H."/>
            <person name="Ichihara T."/>
            <person name="Shiohata N."/>
            <person name="Sano S."/>
            <person name="Moriya S."/>
            <person name="Momiyama H."/>
            <person name="Satoh N."/>
            <person name="Takami S."/>
            <person name="Terashima Y."/>
            <person name="Suzuki O."/>
            <person name="Nakagawa S."/>
            <person name="Senoh A."/>
            <person name="Mizoguchi H."/>
            <person name="Goto Y."/>
            <person name="Shimizu F."/>
            <person name="Wakebe H."/>
            <person name="Hishigaki H."/>
            <person name="Watanabe T."/>
            <person name="Sugiyama A."/>
            <person name="Takemoto M."/>
            <person name="Kawakami B."/>
            <person name="Yamazaki M."/>
            <person name="Watanabe K."/>
            <person name="Kumagai A."/>
            <person name="Itakura S."/>
            <person name="Fukuzumi Y."/>
            <person name="Fujimori Y."/>
            <person name="Komiyama M."/>
            <person name="Tashiro H."/>
            <person name="Tanigami A."/>
            <person name="Fujiwara T."/>
            <person name="Ono T."/>
            <person name="Yamada K."/>
            <person name="Fujii Y."/>
            <person name="Ozaki K."/>
            <person name="Hirao M."/>
            <person name="Ohmori Y."/>
            <person name="Kawabata A."/>
            <person name="Hikiji T."/>
            <person name="Kobatake N."/>
            <person name="Inagaki H."/>
            <person name="Ikema Y."/>
            <person name="Okamoto S."/>
            <person name="Okitani R."/>
            <person name="Kawakami T."/>
            <person name="Noguchi S."/>
            <person name="Itoh T."/>
            <person name="Shigeta K."/>
            <person name="Senba T."/>
            <person name="Matsumura K."/>
            <person name="Nakajima Y."/>
            <person name="Mizuno T."/>
            <person name="Morinaga M."/>
            <person name="Sasaki M."/>
            <person name="Togashi T."/>
            <person name="Oyama M."/>
            <person name="Hata H."/>
            <person name="Watanabe M."/>
            <person name="Komatsu T."/>
            <person name="Mizushima-Sugano J."/>
            <person name="Satoh T."/>
            <person name="Shirai Y."/>
            <person name="Takahashi Y."/>
            <person name="Nakagawa K."/>
            <person name="Okumura K."/>
            <person name="Nagase T."/>
            <person name="Nomura N."/>
            <person name="Kikuchi H."/>
            <person name="Masuho Y."/>
            <person name="Yamashita R."/>
            <person name="Nakai K."/>
            <person name="Yada T."/>
            <person name="Nakamura Y."/>
            <person name="Ohara O."/>
            <person name="Isogai T."/>
            <person name="Sugano S."/>
        </authorList>
    </citation>
    <scope>NUCLEOTIDE SEQUENCE [LARGE SCALE MRNA] (ISOFORM 1)</scope>
</reference>
<reference key="4">
    <citation type="submission" date="1999-09" db="EMBL/GenBank/DDBJ databases">
        <title>Homo sapiens 2,229,817bp genomic DNA of 6p21.3 HLA class I region.</title>
        <authorList>
            <person name="Shiina S."/>
            <person name="Tamiya G."/>
            <person name="Oka A."/>
            <person name="Inoko H."/>
        </authorList>
    </citation>
    <scope>NUCLEOTIDE SEQUENCE [LARGE SCALE GENOMIC DNA]</scope>
</reference>
<reference key="5">
    <citation type="journal article" date="2003" name="Genome Res.">
        <title>Analysis of the gene-dense major histocompatibility complex class III region and its comparison to mouse.</title>
        <authorList>
            <person name="Xie T."/>
            <person name="Rowen L."/>
            <person name="Aguado B."/>
            <person name="Ahearn M.E."/>
            <person name="Madan A."/>
            <person name="Qin S."/>
            <person name="Campbell R.D."/>
            <person name="Hood L."/>
        </authorList>
    </citation>
    <scope>NUCLEOTIDE SEQUENCE [LARGE SCALE GENOMIC DNA]</scope>
</reference>
<reference key="6">
    <citation type="journal article" date="2003" name="Nature">
        <title>The DNA sequence and analysis of human chromosome 6.</title>
        <authorList>
            <person name="Mungall A.J."/>
            <person name="Palmer S.A."/>
            <person name="Sims S.K."/>
            <person name="Edwards C.A."/>
            <person name="Ashurst J.L."/>
            <person name="Wilming L."/>
            <person name="Jones M.C."/>
            <person name="Horton R."/>
            <person name="Hunt S.E."/>
            <person name="Scott C.E."/>
            <person name="Gilbert J.G.R."/>
            <person name="Clamp M.E."/>
            <person name="Bethel G."/>
            <person name="Milne S."/>
            <person name="Ainscough R."/>
            <person name="Almeida J.P."/>
            <person name="Ambrose K.D."/>
            <person name="Andrews T.D."/>
            <person name="Ashwell R.I.S."/>
            <person name="Babbage A.K."/>
            <person name="Bagguley C.L."/>
            <person name="Bailey J."/>
            <person name="Banerjee R."/>
            <person name="Barker D.J."/>
            <person name="Barlow K.F."/>
            <person name="Bates K."/>
            <person name="Beare D.M."/>
            <person name="Beasley H."/>
            <person name="Beasley O."/>
            <person name="Bird C.P."/>
            <person name="Blakey S.E."/>
            <person name="Bray-Allen S."/>
            <person name="Brook J."/>
            <person name="Brown A.J."/>
            <person name="Brown J.Y."/>
            <person name="Burford D.C."/>
            <person name="Burrill W."/>
            <person name="Burton J."/>
            <person name="Carder C."/>
            <person name="Carter N.P."/>
            <person name="Chapman J.C."/>
            <person name="Clark S.Y."/>
            <person name="Clark G."/>
            <person name="Clee C.M."/>
            <person name="Clegg S."/>
            <person name="Cobley V."/>
            <person name="Collier R.E."/>
            <person name="Collins J.E."/>
            <person name="Colman L.K."/>
            <person name="Corby N.R."/>
            <person name="Coville G.J."/>
            <person name="Culley K.M."/>
            <person name="Dhami P."/>
            <person name="Davies J."/>
            <person name="Dunn M."/>
            <person name="Earthrowl M.E."/>
            <person name="Ellington A.E."/>
            <person name="Evans K.A."/>
            <person name="Faulkner L."/>
            <person name="Francis M.D."/>
            <person name="Frankish A."/>
            <person name="Frankland J."/>
            <person name="French L."/>
            <person name="Garner P."/>
            <person name="Garnett J."/>
            <person name="Ghori M.J."/>
            <person name="Gilby L.M."/>
            <person name="Gillson C.J."/>
            <person name="Glithero R.J."/>
            <person name="Grafham D.V."/>
            <person name="Grant M."/>
            <person name="Gribble S."/>
            <person name="Griffiths C."/>
            <person name="Griffiths M.N.D."/>
            <person name="Hall R."/>
            <person name="Halls K.S."/>
            <person name="Hammond S."/>
            <person name="Harley J.L."/>
            <person name="Hart E.A."/>
            <person name="Heath P.D."/>
            <person name="Heathcott R."/>
            <person name="Holmes S.J."/>
            <person name="Howden P.J."/>
            <person name="Howe K.L."/>
            <person name="Howell G.R."/>
            <person name="Huckle E."/>
            <person name="Humphray S.J."/>
            <person name="Humphries M.D."/>
            <person name="Hunt A.R."/>
            <person name="Johnson C.M."/>
            <person name="Joy A.A."/>
            <person name="Kay M."/>
            <person name="Keenan S.J."/>
            <person name="Kimberley A.M."/>
            <person name="King A."/>
            <person name="Laird G.K."/>
            <person name="Langford C."/>
            <person name="Lawlor S."/>
            <person name="Leongamornlert D.A."/>
            <person name="Leversha M."/>
            <person name="Lloyd C.R."/>
            <person name="Lloyd D.M."/>
            <person name="Loveland J.E."/>
            <person name="Lovell J."/>
            <person name="Martin S."/>
            <person name="Mashreghi-Mohammadi M."/>
            <person name="Maslen G.L."/>
            <person name="Matthews L."/>
            <person name="McCann O.T."/>
            <person name="McLaren S.J."/>
            <person name="McLay K."/>
            <person name="McMurray A."/>
            <person name="Moore M.J.F."/>
            <person name="Mullikin J.C."/>
            <person name="Niblett D."/>
            <person name="Nickerson T."/>
            <person name="Novik K.L."/>
            <person name="Oliver K."/>
            <person name="Overton-Larty E.K."/>
            <person name="Parker A."/>
            <person name="Patel R."/>
            <person name="Pearce A.V."/>
            <person name="Peck A.I."/>
            <person name="Phillimore B.J.C.T."/>
            <person name="Phillips S."/>
            <person name="Plumb R.W."/>
            <person name="Porter K.M."/>
            <person name="Ramsey Y."/>
            <person name="Ranby S.A."/>
            <person name="Rice C.M."/>
            <person name="Ross M.T."/>
            <person name="Searle S.M."/>
            <person name="Sehra H.K."/>
            <person name="Sheridan E."/>
            <person name="Skuce C.D."/>
            <person name="Smith S."/>
            <person name="Smith M."/>
            <person name="Spraggon L."/>
            <person name="Squares S.L."/>
            <person name="Steward C.A."/>
            <person name="Sycamore N."/>
            <person name="Tamlyn-Hall G."/>
            <person name="Tester J."/>
            <person name="Theaker A.J."/>
            <person name="Thomas D.W."/>
            <person name="Thorpe A."/>
            <person name="Tracey A."/>
            <person name="Tromans A."/>
            <person name="Tubby B."/>
            <person name="Wall M."/>
            <person name="Wallis J.M."/>
            <person name="West A.P."/>
            <person name="White S.S."/>
            <person name="Whitehead S.L."/>
            <person name="Whittaker H."/>
            <person name="Wild A."/>
            <person name="Willey D.J."/>
            <person name="Wilmer T.E."/>
            <person name="Wood J.M."/>
            <person name="Wray P.W."/>
            <person name="Wyatt J.C."/>
            <person name="Young L."/>
            <person name="Younger R.M."/>
            <person name="Bentley D.R."/>
            <person name="Coulson A."/>
            <person name="Durbin R.M."/>
            <person name="Hubbard T."/>
            <person name="Sulston J.E."/>
            <person name="Dunham I."/>
            <person name="Rogers J."/>
            <person name="Beck S."/>
        </authorList>
    </citation>
    <scope>NUCLEOTIDE SEQUENCE [LARGE SCALE GENOMIC DNA]</scope>
    <scope>VARIANT CYS-176</scope>
</reference>
<reference key="7">
    <citation type="submission" date="2005-07" db="EMBL/GenBank/DDBJ databases">
        <authorList>
            <person name="Mural R.J."/>
            <person name="Istrail S."/>
            <person name="Sutton G.G."/>
            <person name="Florea L."/>
            <person name="Halpern A.L."/>
            <person name="Mobarry C.M."/>
            <person name="Lippert R."/>
            <person name="Walenz B."/>
            <person name="Shatkay H."/>
            <person name="Dew I."/>
            <person name="Miller J.R."/>
            <person name="Flanigan M.J."/>
            <person name="Edwards N.J."/>
            <person name="Bolanos R."/>
            <person name="Fasulo D."/>
            <person name="Halldorsson B.V."/>
            <person name="Hannenhalli S."/>
            <person name="Turner R."/>
            <person name="Yooseph S."/>
            <person name="Lu F."/>
            <person name="Nusskern D.R."/>
            <person name="Shue B.C."/>
            <person name="Zheng X.H."/>
            <person name="Zhong F."/>
            <person name="Delcher A.L."/>
            <person name="Huson D.H."/>
            <person name="Kravitz S.A."/>
            <person name="Mouchard L."/>
            <person name="Reinert K."/>
            <person name="Remington K.A."/>
            <person name="Clark A.G."/>
            <person name="Waterman M.S."/>
            <person name="Eichler E.E."/>
            <person name="Adams M.D."/>
            <person name="Hunkapiller M.W."/>
            <person name="Myers E.W."/>
            <person name="Venter J.C."/>
        </authorList>
    </citation>
    <scope>NUCLEOTIDE SEQUENCE [LARGE SCALE GENOMIC DNA]</scope>
</reference>
<reference key="8">
    <citation type="journal article" date="2006" name="Protein Sci.">
        <title>Characterization of the five novel Ly-6 superfamily members encoded in the MHC, and detection of cells expressing their potential ligands.</title>
        <authorList>
            <person name="Mallya M."/>
            <person name="Campbell R.D."/>
            <person name="Aguado B."/>
        </authorList>
    </citation>
    <scope>GLYCOSYLATION</scope>
    <scope>SUBUNIT</scope>
</reference>
<proteinExistence type="evidence at protein level"/>
<feature type="signal peptide" evidence="2">
    <location>
        <begin position="1"/>
        <end position="18"/>
    </location>
</feature>
<feature type="chain" id="PRO_0000318602" description="Lymphocyte antigen 6 complex locus protein G5b">
    <location>
        <begin position="19"/>
        <end position="201"/>
    </location>
</feature>
<feature type="domain" description="UPAR/Ly6">
    <location>
        <begin position="26"/>
        <end position="118"/>
    </location>
</feature>
<feature type="glycosylation site" description="N-linked (GlcNAc...) asparagine" evidence="2">
    <location>
        <position position="141"/>
    </location>
</feature>
<feature type="glycosylation site" description="N-linked (GlcNAc...) asparagine" evidence="2">
    <location>
        <position position="183"/>
    </location>
</feature>
<feature type="disulfide bond" evidence="1">
    <location>
        <begin position="28"/>
        <end position="55"/>
    </location>
</feature>
<feature type="disulfide bond" evidence="1">
    <location>
        <begin position="31"/>
        <end position="40"/>
    </location>
</feature>
<feature type="disulfide bond" evidence="1">
    <location>
        <begin position="47"/>
        <end position="73"/>
    </location>
</feature>
<feature type="disulfide bond" evidence="1">
    <location>
        <begin position="81"/>
        <end position="98"/>
    </location>
</feature>
<feature type="disulfide bond" evidence="1">
    <location>
        <begin position="99"/>
        <end position="104"/>
    </location>
</feature>
<feature type="splice variant" id="VSP_031255" description="In isoform 2." evidence="5">
    <location>
        <begin position="1"/>
        <end position="55"/>
    </location>
</feature>
<feature type="sequence variant" id="VAR_038842" description="In dbSNP:rs805267.">
    <original>D</original>
    <variation>N</variation>
    <location>
        <position position="102"/>
    </location>
</feature>
<feature type="sequence variant" id="VAR_038843" description="In dbSNP:rs11758242.">
    <original>S</original>
    <variation>Y</variation>
    <location>
        <position position="131"/>
    </location>
</feature>
<feature type="sequence variant" id="VAR_038844" description="In dbSNP:rs9267532." evidence="3">
    <original>R</original>
    <variation>C</variation>
    <location>
        <position position="176"/>
    </location>
</feature>
<comment type="subunit">
    <text evidence="4">Forms oligomer.</text>
</comment>
<comment type="subcellular location">
    <subcellularLocation>
        <location evidence="6">Secreted</location>
    </subcellularLocation>
</comment>
<comment type="alternative products">
    <event type="alternative splicing"/>
    <isoform>
        <id>Q8NDX9-1</id>
        <name>1</name>
        <sequence type="displayed"/>
    </isoform>
    <isoform>
        <id>Q8NDX9-2</id>
        <name>2</name>
        <sequence type="described" ref="VSP_031255"/>
    </isoform>
</comment>
<comment type="PTM">
    <text evidence="4">N-glycosylated.</text>
</comment>